<sequence length="228" mass="24742">MAKDTTGRLRVTVKTGGKRKLSSKLWLERQLNDPYVAQAKRDGWRSRAAYKLIEMDDKYHFLKPGLAVVDLGAAPGGWSQVAARRVGAVDGKGKVVAIDLLEMPEIVGVTFARLDFLDADAPEKLIAMMEGGADIVLSDMAANTTGHRKTDQLRIIGLVESAAAFAADVLRPGGTFIAKVFQSGADADLLVQLKRDFRTVRHVKPASSRQDSSERYVMATGFRGTPAV</sequence>
<dbReference type="EC" id="2.1.1.166" evidence="1"/>
<dbReference type="EMBL" id="CP000319">
    <property type="protein sequence ID" value="ABE63331.1"/>
    <property type="molecule type" value="Genomic_DNA"/>
</dbReference>
<dbReference type="RefSeq" id="WP_011510998.1">
    <property type="nucleotide sequence ID" value="NC_007964.1"/>
</dbReference>
<dbReference type="SMR" id="Q1QKB6"/>
<dbReference type="STRING" id="323097.Nham_2549"/>
<dbReference type="KEGG" id="nha:Nham_2549"/>
<dbReference type="eggNOG" id="COG0293">
    <property type="taxonomic scope" value="Bacteria"/>
</dbReference>
<dbReference type="HOGENOM" id="CLU_009422_4_0_5"/>
<dbReference type="OrthoDB" id="9790080at2"/>
<dbReference type="Proteomes" id="UP000001953">
    <property type="component" value="Chromosome"/>
</dbReference>
<dbReference type="GO" id="GO:0005737">
    <property type="term" value="C:cytoplasm"/>
    <property type="evidence" value="ECO:0007669"/>
    <property type="project" value="UniProtKB-SubCell"/>
</dbReference>
<dbReference type="GO" id="GO:0008650">
    <property type="term" value="F:rRNA (uridine-2'-O-)-methyltransferase activity"/>
    <property type="evidence" value="ECO:0007669"/>
    <property type="project" value="UniProtKB-UniRule"/>
</dbReference>
<dbReference type="Gene3D" id="3.40.50.150">
    <property type="entry name" value="Vaccinia Virus protein VP39"/>
    <property type="match status" value="1"/>
</dbReference>
<dbReference type="HAMAP" id="MF_01547">
    <property type="entry name" value="RNA_methyltr_E"/>
    <property type="match status" value="1"/>
</dbReference>
<dbReference type="InterPro" id="IPR050082">
    <property type="entry name" value="RNA_methyltr_RlmE"/>
</dbReference>
<dbReference type="InterPro" id="IPR002877">
    <property type="entry name" value="RNA_MeTrfase_FtsJ_dom"/>
</dbReference>
<dbReference type="InterPro" id="IPR015507">
    <property type="entry name" value="rRNA-MeTfrase_E"/>
</dbReference>
<dbReference type="InterPro" id="IPR029063">
    <property type="entry name" value="SAM-dependent_MTases_sf"/>
</dbReference>
<dbReference type="PANTHER" id="PTHR10920">
    <property type="entry name" value="RIBOSOMAL RNA METHYLTRANSFERASE"/>
    <property type="match status" value="1"/>
</dbReference>
<dbReference type="PANTHER" id="PTHR10920:SF18">
    <property type="entry name" value="RRNA METHYLTRANSFERASE 2, MITOCHONDRIAL"/>
    <property type="match status" value="1"/>
</dbReference>
<dbReference type="Pfam" id="PF01728">
    <property type="entry name" value="FtsJ"/>
    <property type="match status" value="1"/>
</dbReference>
<dbReference type="PIRSF" id="PIRSF005461">
    <property type="entry name" value="23S_rRNA_mtase"/>
    <property type="match status" value="1"/>
</dbReference>
<dbReference type="SUPFAM" id="SSF53335">
    <property type="entry name" value="S-adenosyl-L-methionine-dependent methyltransferases"/>
    <property type="match status" value="1"/>
</dbReference>
<protein>
    <recommendedName>
        <fullName evidence="1">Ribosomal RNA large subunit methyltransferase E</fullName>
        <ecNumber evidence="1">2.1.1.166</ecNumber>
    </recommendedName>
    <alternativeName>
        <fullName evidence="1">23S rRNA Um2552 methyltransferase</fullName>
    </alternativeName>
    <alternativeName>
        <fullName evidence="1">rRNA (uridine-2'-O-)-methyltransferase</fullName>
    </alternativeName>
</protein>
<feature type="chain" id="PRO_0000282765" description="Ribosomal RNA large subunit methyltransferase E">
    <location>
        <begin position="1"/>
        <end position="228"/>
    </location>
</feature>
<feature type="active site" description="Proton acceptor" evidence="1">
    <location>
        <position position="179"/>
    </location>
</feature>
<feature type="binding site" evidence="1">
    <location>
        <position position="76"/>
    </location>
    <ligand>
        <name>S-adenosyl-L-methionine</name>
        <dbReference type="ChEBI" id="CHEBI:59789"/>
    </ligand>
</feature>
<feature type="binding site" evidence="1">
    <location>
        <position position="78"/>
    </location>
    <ligand>
        <name>S-adenosyl-L-methionine</name>
        <dbReference type="ChEBI" id="CHEBI:59789"/>
    </ligand>
</feature>
<feature type="binding site" evidence="1">
    <location>
        <position position="99"/>
    </location>
    <ligand>
        <name>S-adenosyl-L-methionine</name>
        <dbReference type="ChEBI" id="CHEBI:59789"/>
    </ligand>
</feature>
<feature type="binding site" evidence="1">
    <location>
        <position position="115"/>
    </location>
    <ligand>
        <name>S-adenosyl-L-methionine</name>
        <dbReference type="ChEBI" id="CHEBI:59789"/>
    </ligand>
</feature>
<feature type="binding site" evidence="1">
    <location>
        <position position="139"/>
    </location>
    <ligand>
        <name>S-adenosyl-L-methionine</name>
        <dbReference type="ChEBI" id="CHEBI:59789"/>
    </ligand>
</feature>
<keyword id="KW-0963">Cytoplasm</keyword>
<keyword id="KW-0489">Methyltransferase</keyword>
<keyword id="KW-1185">Reference proteome</keyword>
<keyword id="KW-0698">rRNA processing</keyword>
<keyword id="KW-0949">S-adenosyl-L-methionine</keyword>
<keyword id="KW-0808">Transferase</keyword>
<accession>Q1QKB6</accession>
<organism>
    <name type="scientific">Nitrobacter hamburgensis (strain DSM 10229 / NCIMB 13809 / X14)</name>
    <dbReference type="NCBI Taxonomy" id="323097"/>
    <lineage>
        <taxon>Bacteria</taxon>
        <taxon>Pseudomonadati</taxon>
        <taxon>Pseudomonadota</taxon>
        <taxon>Alphaproteobacteria</taxon>
        <taxon>Hyphomicrobiales</taxon>
        <taxon>Nitrobacteraceae</taxon>
        <taxon>Nitrobacter</taxon>
    </lineage>
</organism>
<comment type="function">
    <text evidence="1">Specifically methylates the uridine in position 2552 of 23S rRNA at the 2'-O position of the ribose in the fully assembled 50S ribosomal subunit.</text>
</comment>
<comment type="catalytic activity">
    <reaction evidence="1">
        <text>uridine(2552) in 23S rRNA + S-adenosyl-L-methionine = 2'-O-methyluridine(2552) in 23S rRNA + S-adenosyl-L-homocysteine + H(+)</text>
        <dbReference type="Rhea" id="RHEA:42720"/>
        <dbReference type="Rhea" id="RHEA-COMP:10202"/>
        <dbReference type="Rhea" id="RHEA-COMP:10203"/>
        <dbReference type="ChEBI" id="CHEBI:15378"/>
        <dbReference type="ChEBI" id="CHEBI:57856"/>
        <dbReference type="ChEBI" id="CHEBI:59789"/>
        <dbReference type="ChEBI" id="CHEBI:65315"/>
        <dbReference type="ChEBI" id="CHEBI:74478"/>
        <dbReference type="EC" id="2.1.1.166"/>
    </reaction>
</comment>
<comment type="subcellular location">
    <subcellularLocation>
        <location evidence="1">Cytoplasm</location>
    </subcellularLocation>
</comment>
<comment type="similarity">
    <text evidence="1">Belongs to the class I-like SAM-binding methyltransferase superfamily. RNA methyltransferase RlmE family.</text>
</comment>
<gene>
    <name evidence="1" type="primary">rlmE</name>
    <name evidence="1" type="synonym">ftsJ</name>
    <name evidence="1" type="synonym">rrmJ</name>
    <name type="ordered locus">Nham_2549</name>
</gene>
<reference key="1">
    <citation type="submission" date="2006-03" db="EMBL/GenBank/DDBJ databases">
        <title>Complete sequence of chromosome of Nitrobacter hamburgensis X14.</title>
        <authorList>
            <consortium name="US DOE Joint Genome Institute"/>
            <person name="Copeland A."/>
            <person name="Lucas S."/>
            <person name="Lapidus A."/>
            <person name="Barry K."/>
            <person name="Detter J.C."/>
            <person name="Glavina del Rio T."/>
            <person name="Hammon N."/>
            <person name="Israni S."/>
            <person name="Dalin E."/>
            <person name="Tice H."/>
            <person name="Pitluck S."/>
            <person name="Chain P."/>
            <person name="Malfatti S."/>
            <person name="Shin M."/>
            <person name="Vergez L."/>
            <person name="Schmutz J."/>
            <person name="Larimer F."/>
            <person name="Land M."/>
            <person name="Hauser L."/>
            <person name="Kyrpides N."/>
            <person name="Ivanova N."/>
            <person name="Ward B."/>
            <person name="Arp D."/>
            <person name="Klotz M."/>
            <person name="Stein L."/>
            <person name="O'Mullan G."/>
            <person name="Starkenburg S."/>
            <person name="Sayavedra L."/>
            <person name="Poret-Peterson A.T."/>
            <person name="Gentry M.E."/>
            <person name="Bruce D."/>
            <person name="Richardson P."/>
        </authorList>
    </citation>
    <scope>NUCLEOTIDE SEQUENCE [LARGE SCALE GENOMIC DNA]</scope>
    <source>
        <strain>DSM 10229 / NCIMB 13809 / X14</strain>
    </source>
</reference>
<name>RLME_NITHX</name>
<evidence type="ECO:0000255" key="1">
    <source>
        <dbReference type="HAMAP-Rule" id="MF_01547"/>
    </source>
</evidence>
<proteinExistence type="inferred from homology"/>